<proteinExistence type="evidence at protein level"/>
<keyword id="KW-0067">ATP-binding</keyword>
<keyword id="KW-0963">Cytoplasm</keyword>
<keyword id="KW-0418">Kinase</keyword>
<keyword id="KW-0547">Nucleotide-binding</keyword>
<keyword id="KW-0539">Nucleus</keyword>
<keyword id="KW-0597">Phosphoprotein</keyword>
<keyword id="KW-1185">Reference proteome</keyword>
<keyword id="KW-0808">Transferase</keyword>
<reference key="1">
    <citation type="journal article" date="1990" name="Nucleic Acids Res.">
        <title>The URK1 gene of Saccharomyces cerevisiae encoding uridine kinase.</title>
        <authorList>
            <person name="Kern L."/>
        </authorList>
    </citation>
    <scope>NUCLEOTIDE SEQUENCE [GENOMIC DNA]</scope>
    <scope>FUNCTION</scope>
    <scope>CATALYTIC ACTIVITY</scope>
    <source>
        <strain>ATCC 28383 / FL100 / VTT C-80102</strain>
    </source>
</reference>
<reference key="2">
    <citation type="journal article" date="1994" name="Yeast">
        <title>Twelve open reading frames revealed in the 23.6 kb segment flanking the centromere on the Saccharomyces cerevisiae chromosome XIV right arm.</title>
        <authorList>
            <person name="Verhasselt P."/>
            <person name="Aert R."/>
            <person name="Voet M."/>
            <person name="Volckaert G."/>
        </authorList>
    </citation>
    <scope>NUCLEOTIDE SEQUENCE [GENOMIC DNA]</scope>
    <source>
        <strain>ATCC 96604 / S288c / FY1679</strain>
    </source>
</reference>
<reference key="3">
    <citation type="journal article" date="1997" name="Nature">
        <title>The nucleotide sequence of Saccharomyces cerevisiae chromosome XIV and its evolutionary implications.</title>
        <authorList>
            <person name="Philippsen P."/>
            <person name="Kleine K."/>
            <person name="Poehlmann R."/>
            <person name="Duesterhoeft A."/>
            <person name="Hamberg K."/>
            <person name="Hegemann J.H."/>
            <person name="Obermaier B."/>
            <person name="Urrestarazu L.A."/>
            <person name="Aert R."/>
            <person name="Albermann K."/>
            <person name="Altmann R."/>
            <person name="Andre B."/>
            <person name="Baladron V."/>
            <person name="Ballesta J.P.G."/>
            <person name="Becam A.-M."/>
            <person name="Beinhauer J.D."/>
            <person name="Boskovic J."/>
            <person name="Buitrago M.J."/>
            <person name="Bussereau F."/>
            <person name="Coster F."/>
            <person name="Crouzet M."/>
            <person name="D'Angelo M."/>
            <person name="Dal Pero F."/>
            <person name="De Antoni A."/>
            <person name="del Rey F."/>
            <person name="Doignon F."/>
            <person name="Domdey H."/>
            <person name="Dubois E."/>
            <person name="Fiedler T.A."/>
            <person name="Fleig U."/>
            <person name="Floeth M."/>
            <person name="Fritz C."/>
            <person name="Gaillardin C."/>
            <person name="Garcia-Cantalejo J.M."/>
            <person name="Glansdorff N."/>
            <person name="Goffeau A."/>
            <person name="Gueldener U."/>
            <person name="Herbert C.J."/>
            <person name="Heumann K."/>
            <person name="Heuss-Neitzel D."/>
            <person name="Hilbert H."/>
            <person name="Hinni K."/>
            <person name="Iraqui Houssaini I."/>
            <person name="Jacquet M."/>
            <person name="Jimenez A."/>
            <person name="Jonniaux J.-L."/>
            <person name="Karpfinger-Hartl L."/>
            <person name="Lanfranchi G."/>
            <person name="Lepingle A."/>
            <person name="Levesque H."/>
            <person name="Lyck R."/>
            <person name="Maftahi M."/>
            <person name="Mallet L."/>
            <person name="Maurer C.T.C."/>
            <person name="Messenguy F."/>
            <person name="Mewes H.-W."/>
            <person name="Moestl D."/>
            <person name="Nasr F."/>
            <person name="Nicaud J.-M."/>
            <person name="Niedenthal R.K."/>
            <person name="Pandolfo D."/>
            <person name="Pierard A."/>
            <person name="Piravandi E."/>
            <person name="Planta R.J."/>
            <person name="Pohl T.M."/>
            <person name="Purnelle B."/>
            <person name="Rebischung C."/>
            <person name="Remacha M.A."/>
            <person name="Revuelta J.L."/>
            <person name="Rinke M."/>
            <person name="Saiz J.E."/>
            <person name="Sartorello F."/>
            <person name="Scherens B."/>
            <person name="Sen-Gupta M."/>
            <person name="Soler-Mira A."/>
            <person name="Urbanus J.H.M."/>
            <person name="Valle G."/>
            <person name="Van Dyck L."/>
            <person name="Verhasselt P."/>
            <person name="Vierendeels F."/>
            <person name="Vissers S."/>
            <person name="Voet M."/>
            <person name="Volckaert G."/>
            <person name="Wach A."/>
            <person name="Wambutt R."/>
            <person name="Wedler H."/>
            <person name="Zollner A."/>
            <person name="Hani J."/>
        </authorList>
    </citation>
    <scope>NUCLEOTIDE SEQUENCE [LARGE SCALE GENOMIC DNA]</scope>
    <source>
        <strain>ATCC 204508 / S288c</strain>
    </source>
</reference>
<reference key="4">
    <citation type="journal article" date="2014" name="G3 (Bethesda)">
        <title>The reference genome sequence of Saccharomyces cerevisiae: Then and now.</title>
        <authorList>
            <person name="Engel S.R."/>
            <person name="Dietrich F.S."/>
            <person name="Fisk D.G."/>
            <person name="Binkley G."/>
            <person name="Balakrishnan R."/>
            <person name="Costanzo M.C."/>
            <person name="Dwight S.S."/>
            <person name="Hitz B.C."/>
            <person name="Karra K."/>
            <person name="Nash R.S."/>
            <person name="Weng S."/>
            <person name="Wong E.D."/>
            <person name="Lloyd P."/>
            <person name="Skrzypek M.S."/>
            <person name="Miyasato S.R."/>
            <person name="Simison M."/>
            <person name="Cherry J.M."/>
        </authorList>
    </citation>
    <scope>GENOME REANNOTATION</scope>
    <source>
        <strain>ATCC 204508 / S288c</strain>
    </source>
</reference>
<reference key="5">
    <citation type="journal article" date="1999" name="Curr. Genet.">
        <title>New insights into the pyrimidine salvage pathway of Saccharomyces cerevisiae: requirement of six genes for cytidine metabolism.</title>
        <authorList>
            <person name="Kurtz J.-E."/>
            <person name="Exinger F."/>
            <person name="Erbs P."/>
            <person name="Jund R."/>
        </authorList>
    </citation>
    <scope>FUNCTION</scope>
    <scope>CATALYTIC ACTIVITY</scope>
</reference>
<reference key="6">
    <citation type="journal article" date="2003" name="Nature">
        <title>Global analysis of protein localization in budding yeast.</title>
        <authorList>
            <person name="Huh W.-K."/>
            <person name="Falvo J.V."/>
            <person name="Gerke L.C."/>
            <person name="Carroll A.S."/>
            <person name="Howson R.W."/>
            <person name="Weissman J.S."/>
            <person name="O'Shea E.K."/>
        </authorList>
    </citation>
    <scope>SUBCELLULAR LOCATION [LARGE SCALE ANALYSIS]</scope>
</reference>
<reference key="7">
    <citation type="journal article" date="2005" name="Mol. Cell. Proteomics">
        <title>Quantitative phosphoproteomics applied to the yeast pheromone signaling pathway.</title>
        <authorList>
            <person name="Gruhler A."/>
            <person name="Olsen J.V."/>
            <person name="Mohammed S."/>
            <person name="Mortensen P."/>
            <person name="Faergeman N.J."/>
            <person name="Mann M."/>
            <person name="Jensen O.N."/>
        </authorList>
    </citation>
    <scope>IDENTIFICATION BY MASS SPECTROMETRY [LARGE SCALE ANALYSIS]</scope>
    <source>
        <strain>YAL6B</strain>
    </source>
</reference>
<reference key="8">
    <citation type="journal article" date="2007" name="J. Proteome Res.">
        <title>Large-scale phosphorylation analysis of alpha-factor-arrested Saccharomyces cerevisiae.</title>
        <authorList>
            <person name="Li X."/>
            <person name="Gerber S.A."/>
            <person name="Rudner A.D."/>
            <person name="Beausoleil S.A."/>
            <person name="Haas W."/>
            <person name="Villen J."/>
            <person name="Elias J.E."/>
            <person name="Gygi S.P."/>
        </authorList>
    </citation>
    <scope>PHOSPHORYLATION [LARGE SCALE ANALYSIS] AT SER-17</scope>
    <scope>IDENTIFICATION BY MASS SPECTROMETRY [LARGE SCALE ANALYSIS]</scope>
    <source>
        <strain>ADR376</strain>
    </source>
</reference>
<reference key="9">
    <citation type="journal article" date="2008" name="Mol. Cell. Proteomics">
        <title>A multidimensional chromatography technology for in-depth phosphoproteome analysis.</title>
        <authorList>
            <person name="Albuquerque C.P."/>
            <person name="Smolka M.B."/>
            <person name="Payne S.H."/>
            <person name="Bafna V."/>
            <person name="Eng J."/>
            <person name="Zhou H."/>
        </authorList>
    </citation>
    <scope>IDENTIFICATION BY MASS SPECTROMETRY [LARGE SCALE ANALYSIS]</scope>
</reference>
<reference key="10">
    <citation type="journal article" date="2009" name="Science">
        <title>Global analysis of Cdk1 substrate phosphorylation sites provides insights into evolution.</title>
        <authorList>
            <person name="Holt L.J."/>
            <person name="Tuch B.B."/>
            <person name="Villen J."/>
            <person name="Johnson A.D."/>
            <person name="Gygi S.P."/>
            <person name="Morgan D.O."/>
        </authorList>
    </citation>
    <scope>PHOSPHORYLATION [LARGE SCALE ANALYSIS] AT SER-17 AND SER-276</scope>
    <scope>IDENTIFICATION BY MASS SPECTROMETRY [LARGE SCALE ANALYSIS]</scope>
</reference>
<dbReference type="EC" id="2.7.1.48" evidence="6 7"/>
<dbReference type="EMBL" id="X53998">
    <property type="protein sequence ID" value="CAA37946.1"/>
    <property type="molecule type" value="Genomic_DNA"/>
</dbReference>
<dbReference type="EMBL" id="X77395">
    <property type="protein sequence ID" value="CAA54580.1"/>
    <property type="molecule type" value="Genomic_DNA"/>
</dbReference>
<dbReference type="EMBL" id="Z71627">
    <property type="protein sequence ID" value="CAA96289.1"/>
    <property type="molecule type" value="Genomic_DNA"/>
</dbReference>
<dbReference type="EMBL" id="BK006947">
    <property type="protein sequence ID" value="DAA10553.1"/>
    <property type="molecule type" value="Genomic_DNA"/>
</dbReference>
<dbReference type="PIR" id="S29374">
    <property type="entry name" value="S29374"/>
</dbReference>
<dbReference type="RefSeq" id="NP_014409.1">
    <property type="nucleotide sequence ID" value="NM_001183189.1"/>
</dbReference>
<dbReference type="SMR" id="P27515"/>
<dbReference type="BioGRID" id="35837">
    <property type="interactions" value="101"/>
</dbReference>
<dbReference type="DIP" id="DIP-1720N"/>
<dbReference type="FunCoup" id="P27515">
    <property type="interactions" value="954"/>
</dbReference>
<dbReference type="IntAct" id="P27515">
    <property type="interactions" value="18"/>
</dbReference>
<dbReference type="MINT" id="P27515"/>
<dbReference type="STRING" id="4932.YNR012W"/>
<dbReference type="GlyGen" id="P27515">
    <property type="glycosylation" value="2 sites, 1 O-linked glycan (2 sites)"/>
</dbReference>
<dbReference type="iPTMnet" id="P27515"/>
<dbReference type="PaxDb" id="4932-YNR012W"/>
<dbReference type="PeptideAtlas" id="P27515"/>
<dbReference type="EnsemblFungi" id="YNR012W_mRNA">
    <property type="protein sequence ID" value="YNR012W"/>
    <property type="gene ID" value="YNR012W"/>
</dbReference>
<dbReference type="GeneID" id="855746"/>
<dbReference type="KEGG" id="sce:YNR012W"/>
<dbReference type="AGR" id="SGD:S000005295"/>
<dbReference type="SGD" id="S000005295">
    <property type="gene designation" value="URK1"/>
</dbReference>
<dbReference type="VEuPathDB" id="FungiDB:YNR012W"/>
<dbReference type="eggNOG" id="KOG4203">
    <property type="taxonomic scope" value="Eukaryota"/>
</dbReference>
<dbReference type="GeneTree" id="ENSGT01020000230412"/>
<dbReference type="HOGENOM" id="CLU_021278_0_2_1"/>
<dbReference type="InParanoid" id="P27515"/>
<dbReference type="OMA" id="EPQLHCE"/>
<dbReference type="OrthoDB" id="738517at2759"/>
<dbReference type="BioCyc" id="MetaCyc:YNR012W-MONOMER"/>
<dbReference type="BioCyc" id="YEAST:YNR012W-MONOMER"/>
<dbReference type="Reactome" id="R-SCE-73614">
    <property type="pathway name" value="Pyrimidine salvage"/>
</dbReference>
<dbReference type="UniPathway" id="UPA00574">
    <property type="reaction ID" value="UER00637"/>
</dbReference>
<dbReference type="UniPathway" id="UPA00579">
    <property type="reaction ID" value="UER00640"/>
</dbReference>
<dbReference type="BioGRID-ORCS" id="855746">
    <property type="hits" value="0 hits in 10 CRISPR screens"/>
</dbReference>
<dbReference type="PRO" id="PR:P27515"/>
<dbReference type="Proteomes" id="UP000002311">
    <property type="component" value="Chromosome XIV"/>
</dbReference>
<dbReference type="RNAct" id="P27515">
    <property type="molecule type" value="protein"/>
</dbReference>
<dbReference type="GO" id="GO:0005737">
    <property type="term" value="C:cytoplasm"/>
    <property type="evidence" value="ECO:0007005"/>
    <property type="project" value="SGD"/>
</dbReference>
<dbReference type="GO" id="GO:0005634">
    <property type="term" value="C:nucleus"/>
    <property type="evidence" value="ECO:0007005"/>
    <property type="project" value="SGD"/>
</dbReference>
<dbReference type="GO" id="GO:0005524">
    <property type="term" value="F:ATP binding"/>
    <property type="evidence" value="ECO:0007669"/>
    <property type="project" value="UniProtKB-KW"/>
</dbReference>
<dbReference type="GO" id="GO:0043771">
    <property type="term" value="F:cytidine kinase activity"/>
    <property type="evidence" value="ECO:0007669"/>
    <property type="project" value="RHEA"/>
</dbReference>
<dbReference type="GO" id="GO:0004849">
    <property type="term" value="F:uridine kinase activity"/>
    <property type="evidence" value="ECO:0000315"/>
    <property type="project" value="SGD"/>
</dbReference>
<dbReference type="GO" id="GO:0044211">
    <property type="term" value="P:CTP salvage"/>
    <property type="evidence" value="ECO:0007669"/>
    <property type="project" value="UniProtKB-UniPathway"/>
</dbReference>
<dbReference type="GO" id="GO:0008655">
    <property type="term" value="P:pyrimidine-containing compound salvage"/>
    <property type="evidence" value="ECO:0000315"/>
    <property type="project" value="SGD"/>
</dbReference>
<dbReference type="GO" id="GO:0044206">
    <property type="term" value="P:UMP salvage"/>
    <property type="evidence" value="ECO:0007669"/>
    <property type="project" value="UniProtKB-UniPathway"/>
</dbReference>
<dbReference type="CDD" id="cd02023">
    <property type="entry name" value="UMPK"/>
    <property type="match status" value="1"/>
</dbReference>
<dbReference type="FunFam" id="3.40.50.300:FF:000339">
    <property type="entry name" value="Uridine kinase"/>
    <property type="match status" value="1"/>
</dbReference>
<dbReference type="FunFam" id="3.40.50.2020:FF:000010">
    <property type="entry name" value="Uridine-cytidine kinase"/>
    <property type="match status" value="1"/>
</dbReference>
<dbReference type="Gene3D" id="3.40.50.2020">
    <property type="match status" value="1"/>
</dbReference>
<dbReference type="Gene3D" id="3.40.50.300">
    <property type="entry name" value="P-loop containing nucleotide triphosphate hydrolases"/>
    <property type="match status" value="1"/>
</dbReference>
<dbReference type="InterPro" id="IPR027417">
    <property type="entry name" value="P-loop_NTPase"/>
</dbReference>
<dbReference type="InterPro" id="IPR000836">
    <property type="entry name" value="PRibTrfase_dom"/>
</dbReference>
<dbReference type="InterPro" id="IPR006083">
    <property type="entry name" value="PRK/URK"/>
</dbReference>
<dbReference type="InterPro" id="IPR029057">
    <property type="entry name" value="PRTase-like"/>
</dbReference>
<dbReference type="InterPro" id="IPR000764">
    <property type="entry name" value="Uridine_kinase-like"/>
</dbReference>
<dbReference type="NCBIfam" id="NF004018">
    <property type="entry name" value="PRK05480.1"/>
    <property type="match status" value="1"/>
</dbReference>
<dbReference type="NCBIfam" id="TIGR00235">
    <property type="entry name" value="udk"/>
    <property type="match status" value="1"/>
</dbReference>
<dbReference type="PANTHER" id="PTHR10285">
    <property type="entry name" value="URIDINE KINASE"/>
    <property type="match status" value="1"/>
</dbReference>
<dbReference type="Pfam" id="PF00485">
    <property type="entry name" value="PRK"/>
    <property type="match status" value="1"/>
</dbReference>
<dbReference type="Pfam" id="PF14681">
    <property type="entry name" value="UPRTase"/>
    <property type="match status" value="1"/>
</dbReference>
<dbReference type="PRINTS" id="PR00988">
    <property type="entry name" value="URIDINKINASE"/>
</dbReference>
<dbReference type="SUPFAM" id="SSF52540">
    <property type="entry name" value="P-loop containing nucleoside triphosphate hydrolases"/>
    <property type="match status" value="1"/>
</dbReference>
<dbReference type="SUPFAM" id="SSF53271">
    <property type="entry name" value="PRTase-like"/>
    <property type="match status" value="1"/>
</dbReference>
<sequence>MSHRIAPSKERSSSFISILDDETRDTLKANAVMDGEVDVKKTKGKSSRYIPPWTTPYIIGIGGASGSGKTSVAAKIVSSINVPWTVLISLDNFYNPLGPEDRARAFKNEYDFDEPNAINLDLAYKCILNLKEGKRTNIPVYSFVHHNRVPDKNIVIYGASVVVIEGIYALYDRRLLDLMDLKIYVDADLDVCLARRLSRDIVSRGRDLDGCIQQWEKFVKPNAVKFVKPTMKNADAIIPSMSDNATAVNLIINHIKSKLELKSNEHLRELIKLGSSPSQDVLNRNIIHELPPTNQVLSLHTMLLNKNLNCADFVFYFDRLATILLSWALDDIPVAHTNIITPGEHTMENVIACQFDQVTAVNIIRSGDCFMKSLRKTIPNITIGKLLIQSDSQTGEPQLHCEFLPPNIEKFGKVFLMEGQIISGAAMIMAIQVLLDHGIDLEKISVVVYLATEVGIRRILNAFDNKVNIFAGMIISREKLQNHQYKWALTRFFDSKYFGCD</sequence>
<accession>P27515</accession>
<accession>D6W1I7</accession>
<comment type="function">
    <text evidence="2 4">Catalyzes the conversion of uridine into UMP and cytidine into CMP in the pyrimidine salvage pathway.</text>
</comment>
<comment type="catalytic activity">
    <reaction evidence="7">
        <text>uridine + ATP = UMP + ADP + H(+)</text>
        <dbReference type="Rhea" id="RHEA:16825"/>
        <dbReference type="ChEBI" id="CHEBI:15378"/>
        <dbReference type="ChEBI" id="CHEBI:16704"/>
        <dbReference type="ChEBI" id="CHEBI:30616"/>
        <dbReference type="ChEBI" id="CHEBI:57865"/>
        <dbReference type="ChEBI" id="CHEBI:456216"/>
        <dbReference type="EC" id="2.7.1.48"/>
    </reaction>
    <physiologicalReaction direction="left-to-right" evidence="7">
        <dbReference type="Rhea" id="RHEA:16826"/>
    </physiologicalReaction>
</comment>
<comment type="catalytic activity">
    <reaction evidence="6">
        <text>cytidine + ATP = CMP + ADP + H(+)</text>
        <dbReference type="Rhea" id="RHEA:24674"/>
        <dbReference type="ChEBI" id="CHEBI:15378"/>
        <dbReference type="ChEBI" id="CHEBI:17562"/>
        <dbReference type="ChEBI" id="CHEBI:30616"/>
        <dbReference type="ChEBI" id="CHEBI:60377"/>
        <dbReference type="ChEBI" id="CHEBI:456216"/>
        <dbReference type="EC" id="2.7.1.48"/>
    </reaction>
    <physiologicalReaction direction="left-to-right" evidence="6">
        <dbReference type="Rhea" id="RHEA:24675"/>
    </physiologicalReaction>
</comment>
<comment type="pathway">
    <text evidence="6">Pyrimidine metabolism; CTP biosynthesis via salvage pathway; CTP from cytidine: step 1/3.</text>
</comment>
<comment type="pathway">
    <text evidence="7">Pyrimidine metabolism; UMP biosynthesis via salvage pathway; UMP from uridine: step 1/1.</text>
</comment>
<comment type="interaction">
    <interactant intactId="EBI-20151">
        <id>P27515</id>
    </interactant>
    <interactant intactId="EBI-35824">
        <id>Q12084</id>
        <label>DAS2</label>
    </interactant>
    <organismsDiffer>false</organismsDiffer>
    <experiments>5</experiments>
</comment>
<comment type="interaction">
    <interactant intactId="EBI-20151">
        <id>P27515</id>
    </interactant>
    <interactant intactId="EBI-20122">
        <id>P18562</id>
        <label>FUR1</label>
    </interactant>
    <organismsDiffer>false</organismsDiffer>
    <experiments>4</experiments>
</comment>
<comment type="subcellular location">
    <subcellularLocation>
        <location evidence="3">Cytoplasm</location>
    </subcellularLocation>
    <subcellularLocation>
        <location evidence="3">Nucleus</location>
    </subcellularLocation>
</comment>
<comment type="similarity">
    <text evidence="5">Belongs to the uridine kinase family.</text>
</comment>
<gene>
    <name type="primary">URK1</name>
    <name type="ordered locus">YNR012W</name>
    <name type="ORF">N2050</name>
</gene>
<organism>
    <name type="scientific">Saccharomyces cerevisiae (strain ATCC 204508 / S288c)</name>
    <name type="common">Baker's yeast</name>
    <dbReference type="NCBI Taxonomy" id="559292"/>
    <lineage>
        <taxon>Eukaryota</taxon>
        <taxon>Fungi</taxon>
        <taxon>Dikarya</taxon>
        <taxon>Ascomycota</taxon>
        <taxon>Saccharomycotina</taxon>
        <taxon>Saccharomycetes</taxon>
        <taxon>Saccharomycetales</taxon>
        <taxon>Saccharomycetaceae</taxon>
        <taxon>Saccharomyces</taxon>
    </lineage>
</organism>
<feature type="chain" id="PRO_0000164462" description="Uridine kinase">
    <location>
        <begin position="1"/>
        <end position="501"/>
    </location>
</feature>
<feature type="binding site" evidence="1">
    <location>
        <begin position="63"/>
        <end position="70"/>
    </location>
    <ligand>
        <name>ATP</name>
        <dbReference type="ChEBI" id="CHEBI:30616"/>
    </ligand>
</feature>
<feature type="modified residue" description="Phosphoserine" evidence="8 9">
    <location>
        <position position="17"/>
    </location>
</feature>
<feature type="modified residue" description="Phosphoserine" evidence="9">
    <location>
        <position position="276"/>
    </location>
</feature>
<protein>
    <recommendedName>
        <fullName>Uridine kinase</fullName>
        <ecNumber evidence="6 7">2.7.1.48</ecNumber>
    </recommendedName>
    <alternativeName>
        <fullName>Uridine monophosphokinase</fullName>
    </alternativeName>
</protein>
<evidence type="ECO:0000255" key="1"/>
<evidence type="ECO:0000269" key="2">
    <source>
    </source>
</evidence>
<evidence type="ECO:0000269" key="3">
    <source>
    </source>
</evidence>
<evidence type="ECO:0000269" key="4">
    <source>
    </source>
</evidence>
<evidence type="ECO:0000305" key="5"/>
<evidence type="ECO:0000305" key="6">
    <source>
    </source>
</evidence>
<evidence type="ECO:0000305" key="7">
    <source>
    </source>
</evidence>
<evidence type="ECO:0007744" key="8">
    <source>
    </source>
</evidence>
<evidence type="ECO:0007744" key="9">
    <source>
    </source>
</evidence>
<name>URK1_YEAST</name>